<evidence type="ECO:0000255" key="1"/>
<evidence type="ECO:0000255" key="2">
    <source>
        <dbReference type="PROSITE-ProRule" id="PRU00192"/>
    </source>
</evidence>
<evidence type="ECO:0000255" key="3">
    <source>
        <dbReference type="PROSITE-ProRule" id="PRU00361"/>
    </source>
</evidence>
<evidence type="ECO:0000269" key="4">
    <source>
    </source>
</evidence>
<evidence type="ECO:0000269" key="5">
    <source>
    </source>
</evidence>
<evidence type="ECO:0000269" key="6">
    <source>
    </source>
</evidence>
<evidence type="ECO:0000269" key="7">
    <source>
    </source>
</evidence>
<evidence type="ECO:0000303" key="8">
    <source>
    </source>
</evidence>
<evidence type="ECO:0000305" key="9"/>
<evidence type="ECO:0000305" key="10">
    <source>
    </source>
</evidence>
<evidence type="ECO:0000312" key="11">
    <source>
        <dbReference type="Araport" id="AT4G18060"/>
    </source>
</evidence>
<evidence type="ECO:0000312" key="12">
    <source>
        <dbReference type="EMBL" id="CAB53647.1"/>
    </source>
</evidence>
<dbReference type="EMBL" id="AF367775">
    <property type="protein sequence ID" value="AAL32440.1"/>
    <property type="molecule type" value="mRNA"/>
</dbReference>
<dbReference type="EMBL" id="AL110123">
    <property type="protein sequence ID" value="CAB53647.1"/>
    <property type="status" value="ALT_SEQ"/>
    <property type="molecule type" value="Genomic_DNA"/>
</dbReference>
<dbReference type="EMBL" id="AL161547">
    <property type="protein sequence ID" value="CAB78808.1"/>
    <property type="status" value="ALT_SEQ"/>
    <property type="molecule type" value="Genomic_DNA"/>
</dbReference>
<dbReference type="EMBL" id="CP002687">
    <property type="protein sequence ID" value="AEE83989.1"/>
    <property type="molecule type" value="Genomic_DNA"/>
</dbReference>
<dbReference type="EMBL" id="AY125505">
    <property type="protein sequence ID" value="AAM78097.1"/>
    <property type="molecule type" value="mRNA"/>
</dbReference>
<dbReference type="EMBL" id="BT002255">
    <property type="protein sequence ID" value="AAN72266.1"/>
    <property type="molecule type" value="mRNA"/>
</dbReference>
<dbReference type="PIR" id="T14806">
    <property type="entry name" value="T14806"/>
</dbReference>
<dbReference type="RefSeq" id="NP_193540.3">
    <property type="nucleotide sequence ID" value="NM_117916.6"/>
</dbReference>
<dbReference type="SMR" id="Q8L7W0"/>
<dbReference type="FunCoup" id="Q8L7W0">
    <property type="interactions" value="2093"/>
</dbReference>
<dbReference type="IntAct" id="Q8L7W0">
    <property type="interactions" value="9"/>
</dbReference>
<dbReference type="STRING" id="3702.Q8L7W0"/>
<dbReference type="iPTMnet" id="Q8L7W0"/>
<dbReference type="PaxDb" id="3702-AT4G18060.1"/>
<dbReference type="ProteomicsDB" id="234510"/>
<dbReference type="EnsemblPlants" id="AT4G18060.1">
    <property type="protein sequence ID" value="AT4G18060.1"/>
    <property type="gene ID" value="AT4G18060"/>
</dbReference>
<dbReference type="GeneID" id="827531"/>
<dbReference type="Gramene" id="AT4G18060.1">
    <property type="protein sequence ID" value="AT4G18060.1"/>
    <property type="gene ID" value="AT4G18060"/>
</dbReference>
<dbReference type="KEGG" id="ath:AT4G18060"/>
<dbReference type="Araport" id="AT4G18060"/>
<dbReference type="TAIR" id="AT4G18060">
    <property type="gene designation" value="SH3P3"/>
</dbReference>
<dbReference type="eggNOG" id="ENOG502QZ2M">
    <property type="taxonomic scope" value="Eukaryota"/>
</dbReference>
<dbReference type="HOGENOM" id="CLU_045749_0_0_1"/>
<dbReference type="InParanoid" id="Q8L7W0"/>
<dbReference type="OMA" id="PAHIPEK"/>
<dbReference type="OrthoDB" id="443981at2759"/>
<dbReference type="PhylomeDB" id="Q8L7W0"/>
<dbReference type="CD-CODE" id="4299E36E">
    <property type="entry name" value="Nucleolus"/>
</dbReference>
<dbReference type="PRO" id="PR:Q8L7W0"/>
<dbReference type="Proteomes" id="UP000006548">
    <property type="component" value="Chromosome 4"/>
</dbReference>
<dbReference type="ExpressionAtlas" id="Q8L7W0">
    <property type="expression patterns" value="baseline and differential"/>
</dbReference>
<dbReference type="GO" id="GO:0030136">
    <property type="term" value="C:clathrin-coated vesicle"/>
    <property type="evidence" value="ECO:0007669"/>
    <property type="project" value="UniProtKB-SubCell"/>
</dbReference>
<dbReference type="GO" id="GO:0005829">
    <property type="term" value="C:cytosol"/>
    <property type="evidence" value="ECO:0007005"/>
    <property type="project" value="TAIR"/>
</dbReference>
<dbReference type="Gene3D" id="1.20.1270.60">
    <property type="entry name" value="Arfaptin homology (AH) domain/BAR domain"/>
    <property type="match status" value="1"/>
</dbReference>
<dbReference type="Gene3D" id="2.30.30.40">
    <property type="entry name" value="SH3 Domains"/>
    <property type="match status" value="1"/>
</dbReference>
<dbReference type="InterPro" id="IPR027267">
    <property type="entry name" value="AH/BAR_dom_sf"/>
</dbReference>
<dbReference type="InterPro" id="IPR050384">
    <property type="entry name" value="Endophilin_SH3RF"/>
</dbReference>
<dbReference type="InterPro" id="IPR036028">
    <property type="entry name" value="SH3-like_dom_sf"/>
</dbReference>
<dbReference type="InterPro" id="IPR001452">
    <property type="entry name" value="SH3_domain"/>
</dbReference>
<dbReference type="PANTHER" id="PTHR14167">
    <property type="entry name" value="SH3 DOMAIN-CONTAINING"/>
    <property type="match status" value="1"/>
</dbReference>
<dbReference type="PANTHER" id="PTHR14167:SF77">
    <property type="entry name" value="SH3 DOMAIN-CONTAINING PROTEIN 3"/>
    <property type="match status" value="1"/>
</dbReference>
<dbReference type="Pfam" id="PF14604">
    <property type="entry name" value="SH3_9"/>
    <property type="match status" value="1"/>
</dbReference>
<dbReference type="PRINTS" id="PR00499">
    <property type="entry name" value="P67PHOX"/>
</dbReference>
<dbReference type="SMART" id="SM00326">
    <property type="entry name" value="SH3"/>
    <property type="match status" value="1"/>
</dbReference>
<dbReference type="SUPFAM" id="SSF103657">
    <property type="entry name" value="BAR/IMD domain-like"/>
    <property type="match status" value="1"/>
</dbReference>
<dbReference type="SUPFAM" id="SSF50044">
    <property type="entry name" value="SH3-domain"/>
    <property type="match status" value="1"/>
</dbReference>
<dbReference type="PROSITE" id="PS50002">
    <property type="entry name" value="SH3"/>
    <property type="match status" value="1"/>
</dbReference>
<accession>Q8L7W0</accession>
<accession>Q8W5A0</accession>
<accession>Q9SVW5</accession>
<feature type="chain" id="PRO_0000434152" description="SH3 domain-containing protein 3">
    <location>
        <begin position="1"/>
        <end position="351"/>
    </location>
</feature>
<feature type="domain" description="BAR" evidence="3">
    <location>
        <begin position="31"/>
        <end position="267"/>
    </location>
</feature>
<feature type="domain" description="SH3" evidence="2">
    <location>
        <begin position="281"/>
        <end position="340"/>
    </location>
</feature>
<feature type="coiled-coil region" evidence="1">
    <location>
        <begin position="1"/>
        <end position="21"/>
    </location>
</feature>
<feature type="coiled-coil region" evidence="1">
    <location>
        <begin position="193"/>
        <end position="213"/>
    </location>
</feature>
<feature type="sequence conflict" description="In Ref. 1; AAL32440." evidence="9" ref="1">
    <original>NSQ</original>
    <variation>IVR</variation>
    <location>
        <begin position="99"/>
        <end position="101"/>
    </location>
</feature>
<feature type="sequence conflict" description="In Ref. 1; AAL32440." evidence="9" ref="1">
    <original>P</original>
    <variation>L</variation>
    <location>
        <position position="269"/>
    </location>
</feature>
<feature type="sequence conflict" description="In Ref. 1; AAL32440." evidence="9" ref="1">
    <original>A</original>
    <variation>V</variation>
    <location>
        <position position="295"/>
    </location>
</feature>
<gene>
    <name evidence="8" type="primary">SH3P3</name>
    <name evidence="11" type="ordered locus">At4g18060</name>
    <name evidence="12" type="ORF">F15J5.30</name>
</gene>
<name>SH3P3_ARATH</name>
<comment type="function">
    <text evidence="10">May be involved in the recruitment of DRP2A to the accessory protein complex and in the negative regulation of its GTPase activity.</text>
</comment>
<comment type="subunit">
    <text evidence="5 6 7">Interacts with FREE1 (PubMed:25699591). Interacts (via SH3 domain) with DRP2A/ADL6 (PubMed:12207647). Binds to SH3P2 (PubMed:28584166).</text>
</comment>
<comment type="interaction">
    <interactant intactId="EBI-9160890">
        <id>Q8L7W0</id>
    </interactant>
    <interactant intactId="EBI-4426557">
        <id>Q84MB2</id>
        <label>TIFY8</label>
    </interactant>
    <organismsDiffer>false</organismsDiffer>
    <experiments>3</experiments>
</comment>
<comment type="subcellular location">
    <subcellularLocation>
        <location evidence="4 5">Cytoplasmic vesicle</location>
        <location evidence="4 5">Clathrin-coated vesicle</location>
    </subcellularLocation>
</comment>
<comment type="tissue specificity">
    <text evidence="4">Detected in all tissues except seedlings.</text>
</comment>
<comment type="sequence caution" evidence="9">
    <conflict type="erroneous gene model prediction">
        <sequence resource="EMBL-CDS" id="CAB53647"/>
    </conflict>
</comment>
<comment type="sequence caution" evidence="9">
    <conflict type="erroneous gene model prediction">
        <sequence resource="EMBL-CDS" id="CAB78808"/>
    </conflict>
</comment>
<protein>
    <recommendedName>
        <fullName evidence="8">SH3 domain-containing protein 3</fullName>
        <shortName evidence="8">AtSH3P3</shortName>
    </recommendedName>
</protein>
<keyword id="KW-0175">Coiled coil</keyword>
<keyword id="KW-0968">Cytoplasmic vesicle</keyword>
<keyword id="KW-1185">Reference proteome</keyword>
<keyword id="KW-0728">SH3 domain</keyword>
<proteinExistence type="evidence at protein level"/>
<sequence length="351" mass="39534">MDAFRRQASKLRDQVAKQQLAVIKQFSGTGYESSDVMVIDELEMQRHHQLDKLYRSTRSAKEFQRDIVKAAEAFTTIGLRHIEAGTKLSEDCCRYGNENSQNIDENILAKAAAIYGDARKHVDKEQEDFNKLLASQVLDPLRAMVAGSPLEDARHLAQRYSRMRQEAETHATEVSRRQARVREAPIPENVAKLQLAEAKMQELKANMAVLGKEATAALAAVESQQHRLTFQRLVAMVEGEKNYHLRIAAILSDIEAEMVTEKQHKESAPPAIPTENGSEKTSYFLAEVIHPFSAASEKELDLDKGDYIVVRKVSQTGWAEGECKGKAGWFPMAYIEKRQRLPTTNFAAEVY</sequence>
<organism>
    <name type="scientific">Arabidopsis thaliana</name>
    <name type="common">Mouse-ear cress</name>
    <dbReference type="NCBI Taxonomy" id="3702"/>
    <lineage>
        <taxon>Eukaryota</taxon>
        <taxon>Viridiplantae</taxon>
        <taxon>Streptophyta</taxon>
        <taxon>Embryophyta</taxon>
        <taxon>Tracheophyta</taxon>
        <taxon>Spermatophyta</taxon>
        <taxon>Magnoliopsida</taxon>
        <taxon>eudicotyledons</taxon>
        <taxon>Gunneridae</taxon>
        <taxon>Pentapetalae</taxon>
        <taxon>rosids</taxon>
        <taxon>malvids</taxon>
        <taxon>Brassicales</taxon>
        <taxon>Brassicaceae</taxon>
        <taxon>Camelineae</taxon>
        <taxon>Arabidopsis</taxon>
    </lineage>
</organism>
<reference key="1">
    <citation type="journal article" date="2001" name="Plant Cell">
        <title>Role of SH3 domain-containing proteins in clathrin-mediated vesicle trafficking in Arabidopsis.</title>
        <authorList>
            <person name="Lam B.C.-H."/>
            <person name="Sage T.L."/>
            <person name="Bianchi F."/>
            <person name="Blumwald E."/>
        </authorList>
    </citation>
    <scope>NUCLEOTIDE SEQUENCE [MRNA]</scope>
    <scope>TISSUE SPECIFICITY</scope>
    <scope>SUBCELLULAR LOCATION</scope>
</reference>
<reference key="2">
    <citation type="journal article" date="1999" name="Nature">
        <title>Sequence and analysis of chromosome 4 of the plant Arabidopsis thaliana.</title>
        <authorList>
            <person name="Mayer K.F.X."/>
            <person name="Schueller C."/>
            <person name="Wambutt R."/>
            <person name="Murphy G."/>
            <person name="Volckaert G."/>
            <person name="Pohl T."/>
            <person name="Duesterhoeft A."/>
            <person name="Stiekema W."/>
            <person name="Entian K.-D."/>
            <person name="Terryn N."/>
            <person name="Harris B."/>
            <person name="Ansorge W."/>
            <person name="Brandt P."/>
            <person name="Grivell L.A."/>
            <person name="Rieger M."/>
            <person name="Weichselgartner M."/>
            <person name="de Simone V."/>
            <person name="Obermaier B."/>
            <person name="Mache R."/>
            <person name="Mueller M."/>
            <person name="Kreis M."/>
            <person name="Delseny M."/>
            <person name="Puigdomenech P."/>
            <person name="Watson M."/>
            <person name="Schmidtheini T."/>
            <person name="Reichert B."/>
            <person name="Portetelle D."/>
            <person name="Perez-Alonso M."/>
            <person name="Boutry M."/>
            <person name="Bancroft I."/>
            <person name="Vos P."/>
            <person name="Hoheisel J."/>
            <person name="Zimmermann W."/>
            <person name="Wedler H."/>
            <person name="Ridley P."/>
            <person name="Langham S.-A."/>
            <person name="McCullagh B."/>
            <person name="Bilham L."/>
            <person name="Robben J."/>
            <person name="van der Schueren J."/>
            <person name="Grymonprez B."/>
            <person name="Chuang Y.-J."/>
            <person name="Vandenbussche F."/>
            <person name="Braeken M."/>
            <person name="Weltjens I."/>
            <person name="Voet M."/>
            <person name="Bastiaens I."/>
            <person name="Aert R."/>
            <person name="Defoor E."/>
            <person name="Weitzenegger T."/>
            <person name="Bothe G."/>
            <person name="Ramsperger U."/>
            <person name="Hilbert H."/>
            <person name="Braun M."/>
            <person name="Holzer E."/>
            <person name="Brandt A."/>
            <person name="Peters S."/>
            <person name="van Staveren M."/>
            <person name="Dirkse W."/>
            <person name="Mooijman P."/>
            <person name="Klein Lankhorst R."/>
            <person name="Rose M."/>
            <person name="Hauf J."/>
            <person name="Koetter P."/>
            <person name="Berneiser S."/>
            <person name="Hempel S."/>
            <person name="Feldpausch M."/>
            <person name="Lamberth S."/>
            <person name="Van den Daele H."/>
            <person name="De Keyser A."/>
            <person name="Buysshaert C."/>
            <person name="Gielen J."/>
            <person name="Villarroel R."/>
            <person name="De Clercq R."/>
            <person name="van Montagu M."/>
            <person name="Rogers J."/>
            <person name="Cronin A."/>
            <person name="Quail M.A."/>
            <person name="Bray-Allen S."/>
            <person name="Clark L."/>
            <person name="Doggett J."/>
            <person name="Hall S."/>
            <person name="Kay M."/>
            <person name="Lennard N."/>
            <person name="McLay K."/>
            <person name="Mayes R."/>
            <person name="Pettett A."/>
            <person name="Rajandream M.A."/>
            <person name="Lyne M."/>
            <person name="Benes V."/>
            <person name="Rechmann S."/>
            <person name="Borkova D."/>
            <person name="Bloecker H."/>
            <person name="Scharfe M."/>
            <person name="Grimm M."/>
            <person name="Loehnert T.-H."/>
            <person name="Dose S."/>
            <person name="de Haan M."/>
            <person name="Maarse A.C."/>
            <person name="Schaefer M."/>
            <person name="Mueller-Auer S."/>
            <person name="Gabel C."/>
            <person name="Fuchs M."/>
            <person name="Fartmann B."/>
            <person name="Granderath K."/>
            <person name="Dauner D."/>
            <person name="Herzl A."/>
            <person name="Neumann S."/>
            <person name="Argiriou A."/>
            <person name="Vitale D."/>
            <person name="Liguori R."/>
            <person name="Piravandi E."/>
            <person name="Massenet O."/>
            <person name="Quigley F."/>
            <person name="Clabauld G."/>
            <person name="Muendlein A."/>
            <person name="Felber R."/>
            <person name="Schnabl S."/>
            <person name="Hiller R."/>
            <person name="Schmidt W."/>
            <person name="Lecharny A."/>
            <person name="Aubourg S."/>
            <person name="Chefdor F."/>
            <person name="Cooke R."/>
            <person name="Berger C."/>
            <person name="Monfort A."/>
            <person name="Casacuberta E."/>
            <person name="Gibbons T."/>
            <person name="Weber N."/>
            <person name="Vandenbol M."/>
            <person name="Bargues M."/>
            <person name="Terol J."/>
            <person name="Torres A."/>
            <person name="Perez-Perez A."/>
            <person name="Purnelle B."/>
            <person name="Bent E."/>
            <person name="Johnson S."/>
            <person name="Tacon D."/>
            <person name="Jesse T."/>
            <person name="Heijnen L."/>
            <person name="Schwarz S."/>
            <person name="Scholler P."/>
            <person name="Heber S."/>
            <person name="Francs P."/>
            <person name="Bielke C."/>
            <person name="Frishman D."/>
            <person name="Haase D."/>
            <person name="Lemcke K."/>
            <person name="Mewes H.-W."/>
            <person name="Stocker S."/>
            <person name="Zaccaria P."/>
            <person name="Bevan M."/>
            <person name="Wilson R.K."/>
            <person name="de la Bastide M."/>
            <person name="Habermann K."/>
            <person name="Parnell L."/>
            <person name="Dedhia N."/>
            <person name="Gnoj L."/>
            <person name="Schutz K."/>
            <person name="Huang E."/>
            <person name="Spiegel L."/>
            <person name="Sekhon M."/>
            <person name="Murray J."/>
            <person name="Sheet P."/>
            <person name="Cordes M."/>
            <person name="Abu-Threideh J."/>
            <person name="Stoneking T."/>
            <person name="Kalicki J."/>
            <person name="Graves T."/>
            <person name="Harmon G."/>
            <person name="Edwards J."/>
            <person name="Latreille P."/>
            <person name="Courtney L."/>
            <person name="Cloud J."/>
            <person name="Abbott A."/>
            <person name="Scott K."/>
            <person name="Johnson D."/>
            <person name="Minx P."/>
            <person name="Bentley D."/>
            <person name="Fulton B."/>
            <person name="Miller N."/>
            <person name="Greco T."/>
            <person name="Kemp K."/>
            <person name="Kramer J."/>
            <person name="Fulton L."/>
            <person name="Mardis E."/>
            <person name="Dante M."/>
            <person name="Pepin K."/>
            <person name="Hillier L.W."/>
            <person name="Nelson J."/>
            <person name="Spieth J."/>
            <person name="Ryan E."/>
            <person name="Andrews S."/>
            <person name="Geisel C."/>
            <person name="Layman D."/>
            <person name="Du H."/>
            <person name="Ali J."/>
            <person name="Berghoff A."/>
            <person name="Jones K."/>
            <person name="Drone K."/>
            <person name="Cotton M."/>
            <person name="Joshu C."/>
            <person name="Antonoiu B."/>
            <person name="Zidanic M."/>
            <person name="Strong C."/>
            <person name="Sun H."/>
            <person name="Lamar B."/>
            <person name="Yordan C."/>
            <person name="Ma P."/>
            <person name="Zhong J."/>
            <person name="Preston R."/>
            <person name="Vil D."/>
            <person name="Shekher M."/>
            <person name="Matero A."/>
            <person name="Shah R."/>
            <person name="Swaby I.K."/>
            <person name="O'Shaughnessy A."/>
            <person name="Rodriguez M."/>
            <person name="Hoffman J."/>
            <person name="Till S."/>
            <person name="Granat S."/>
            <person name="Shohdy N."/>
            <person name="Hasegawa A."/>
            <person name="Hameed A."/>
            <person name="Lodhi M."/>
            <person name="Johnson A."/>
            <person name="Chen E."/>
            <person name="Marra M.A."/>
            <person name="Martienssen R."/>
            <person name="McCombie W.R."/>
        </authorList>
    </citation>
    <scope>NUCLEOTIDE SEQUENCE [LARGE SCALE GENOMIC DNA]</scope>
    <source>
        <strain>cv. Columbia</strain>
    </source>
</reference>
<reference key="3">
    <citation type="journal article" date="2017" name="Plant J.">
        <title>Araport11: a complete reannotation of the Arabidopsis thaliana reference genome.</title>
        <authorList>
            <person name="Cheng C.Y."/>
            <person name="Krishnakumar V."/>
            <person name="Chan A.P."/>
            <person name="Thibaud-Nissen F."/>
            <person name="Schobel S."/>
            <person name="Town C.D."/>
        </authorList>
    </citation>
    <scope>GENOME REANNOTATION</scope>
    <source>
        <strain>cv. Columbia</strain>
    </source>
</reference>
<reference key="4">
    <citation type="journal article" date="2003" name="Science">
        <title>Empirical analysis of transcriptional activity in the Arabidopsis genome.</title>
        <authorList>
            <person name="Yamada K."/>
            <person name="Lim J."/>
            <person name="Dale J.M."/>
            <person name="Chen H."/>
            <person name="Shinn P."/>
            <person name="Palm C.J."/>
            <person name="Southwick A.M."/>
            <person name="Wu H.C."/>
            <person name="Kim C.J."/>
            <person name="Nguyen M."/>
            <person name="Pham P.K."/>
            <person name="Cheuk R.F."/>
            <person name="Karlin-Newmann G."/>
            <person name="Liu S.X."/>
            <person name="Lam B."/>
            <person name="Sakano H."/>
            <person name="Wu T."/>
            <person name="Yu G."/>
            <person name="Miranda M."/>
            <person name="Quach H.L."/>
            <person name="Tripp M."/>
            <person name="Chang C.H."/>
            <person name="Lee J.M."/>
            <person name="Toriumi M.J."/>
            <person name="Chan M.M."/>
            <person name="Tang C.C."/>
            <person name="Onodera C.S."/>
            <person name="Deng J.M."/>
            <person name="Akiyama K."/>
            <person name="Ansari Y."/>
            <person name="Arakawa T."/>
            <person name="Banh J."/>
            <person name="Banno F."/>
            <person name="Bowser L."/>
            <person name="Brooks S.Y."/>
            <person name="Carninci P."/>
            <person name="Chao Q."/>
            <person name="Choy N."/>
            <person name="Enju A."/>
            <person name="Goldsmith A.D."/>
            <person name="Gurjal M."/>
            <person name="Hansen N.F."/>
            <person name="Hayashizaki Y."/>
            <person name="Johnson-Hopson C."/>
            <person name="Hsuan V.W."/>
            <person name="Iida K."/>
            <person name="Karnes M."/>
            <person name="Khan S."/>
            <person name="Koesema E."/>
            <person name="Ishida J."/>
            <person name="Jiang P.X."/>
            <person name="Jones T."/>
            <person name="Kawai J."/>
            <person name="Kamiya A."/>
            <person name="Meyers C."/>
            <person name="Nakajima M."/>
            <person name="Narusaka M."/>
            <person name="Seki M."/>
            <person name="Sakurai T."/>
            <person name="Satou M."/>
            <person name="Tamse R."/>
            <person name="Vaysberg M."/>
            <person name="Wallender E.K."/>
            <person name="Wong C."/>
            <person name="Yamamura Y."/>
            <person name="Yuan S."/>
            <person name="Shinozaki K."/>
            <person name="Davis R.W."/>
            <person name="Theologis A."/>
            <person name="Ecker J.R."/>
        </authorList>
    </citation>
    <scope>NUCLEOTIDE SEQUENCE [LARGE SCALE MRNA]</scope>
    <source>
        <strain>cv. Columbia</strain>
    </source>
</reference>
<reference key="5">
    <citation type="journal article" date="2002" name="Plant J.">
        <title>Regulation of ADL6 activity by its associated molecular network.</title>
        <authorList>
            <person name="Lam B.C.-H."/>
            <person name="Sage T.L."/>
            <person name="Bianchi F."/>
            <person name="Blumwald E."/>
        </authorList>
    </citation>
    <scope>FUNCTION</scope>
    <scope>SUBCELLULAR LOCATION</scope>
    <scope>INTERACTION WITH DRP2A</scope>
</reference>
<reference key="6">
    <citation type="journal article" date="2015" name="Plant Physiol.">
        <title>FYVE1 is essential for vacuole biogenesis and intracellular trafficking in Arabidopsis.</title>
        <authorList>
            <person name="Kolb C."/>
            <person name="Nagel M.K."/>
            <person name="Kalinowska K."/>
            <person name="Hagmann J."/>
            <person name="Ichikawa M."/>
            <person name="Anzenberger F."/>
            <person name="Alkofer A."/>
            <person name="Sato M.H."/>
            <person name="Braun P."/>
            <person name="Isono E."/>
        </authorList>
    </citation>
    <scope>INTERACTION WITH FREE1</scope>
</reference>
<reference key="7">
    <citation type="journal article" date="2017" name="Plant Cell">
        <title>SH3 domain-containing protein 2 plays a crucial role at the step of membrane tubulation during cell plate formation.</title>
        <authorList>
            <person name="Ahn G."/>
            <person name="Kim H."/>
            <person name="Kim D.H."/>
            <person name="Hanh H."/>
            <person name="Yoon Y."/>
            <person name="Singaram I."/>
            <person name="Wijesinghe K.J."/>
            <person name="Johnson K.A."/>
            <person name="Zhuang X."/>
            <person name="Liang Z."/>
            <person name="Stahelin R.V."/>
            <person name="Jiang L."/>
            <person name="Cho W."/>
            <person name="Kang B.-H."/>
            <person name="Hwang I."/>
        </authorList>
    </citation>
    <scope>INTERACTION WITH SH3P2</scope>
    <source>
        <strain>cv. Columbia</strain>
        <strain>cv. Wassilewskija-2</strain>
    </source>
</reference>